<evidence type="ECO:0000250" key="1"/>
<evidence type="ECO:0000250" key="2">
    <source>
        <dbReference type="UniProtKB" id="Q9NWW6"/>
    </source>
</evidence>
<evidence type="ECO:0000305" key="3"/>
<name>NRK1_EREGS</name>
<gene>
    <name type="primary">NRK1</name>
    <name type="ordered locus">AGR342C</name>
</gene>
<protein>
    <recommendedName>
        <fullName>Nicotinamide riboside kinase</fullName>
        <shortName>NRK</shortName>
        <shortName>NmR-K</shortName>
        <ecNumber evidence="2">2.7.1.22</ecNumber>
    </recommendedName>
    <alternativeName>
        <fullName>Nicotinic acid riboside kinase</fullName>
        <ecNumber evidence="2">2.7.1.173</ecNumber>
    </alternativeName>
    <alternativeName>
        <fullName>Ribosylnicotinamide kinase</fullName>
        <shortName>RNK</shortName>
    </alternativeName>
    <alternativeName>
        <fullName>Ribosylnicotinic acid kinase</fullName>
    </alternativeName>
</protein>
<keyword id="KW-0067">ATP-binding</keyword>
<keyword id="KW-0418">Kinase</keyword>
<keyword id="KW-0460">Magnesium</keyword>
<keyword id="KW-0479">Metal-binding</keyword>
<keyword id="KW-0547">Nucleotide-binding</keyword>
<keyword id="KW-0662">Pyridine nucleotide biosynthesis</keyword>
<keyword id="KW-1185">Reference proteome</keyword>
<keyword id="KW-0808">Transferase</keyword>
<accession>P62511</accession>
<accession>Q74Z64</accession>
<feature type="chain" id="PRO_0000215896" description="Nicotinamide riboside kinase">
    <location>
        <begin position="1"/>
        <end position="241"/>
    </location>
</feature>
<feature type="active site" description="Proton acceptor" evidence="2">
    <location>
        <position position="47"/>
    </location>
</feature>
<feature type="binding site" evidence="2">
    <location>
        <begin position="21"/>
        <end position="29"/>
    </location>
    <ligand>
        <name>ATP</name>
        <dbReference type="ChEBI" id="CHEBI:30616"/>
    </ligand>
</feature>
<feature type="binding site" evidence="1">
    <location>
        <position position="28"/>
    </location>
    <ligand>
        <name>Mg(2+)</name>
        <dbReference type="ChEBI" id="CHEBI:18420"/>
    </ligand>
</feature>
<feature type="binding site" evidence="2">
    <location>
        <begin position="47"/>
        <end position="50"/>
    </location>
    <ligand>
        <name>substrate</name>
    </ligand>
</feature>
<feature type="binding site" evidence="2">
    <location>
        <position position="47"/>
    </location>
    <ligand>
        <name>Mg(2+)</name>
        <dbReference type="ChEBI" id="CHEBI:18420"/>
    </ligand>
</feature>
<feature type="binding site" evidence="2">
    <location>
        <begin position="67"/>
        <end position="68"/>
    </location>
    <ligand>
        <name>substrate</name>
    </ligand>
</feature>
<feature type="binding site" evidence="1">
    <location>
        <position position="68"/>
    </location>
    <ligand>
        <name>substrate</name>
    </ligand>
</feature>
<feature type="binding site" evidence="2">
    <location>
        <position position="163"/>
    </location>
    <ligand>
        <name>ATP</name>
        <dbReference type="ChEBI" id="CHEBI:30616"/>
    </ligand>
</feature>
<feature type="binding site" evidence="2">
    <location>
        <position position="164"/>
    </location>
    <ligand>
        <name>substrate</name>
    </ligand>
</feature>
<feature type="binding site" evidence="2">
    <location>
        <begin position="167"/>
        <end position="169"/>
    </location>
    <ligand>
        <name>ATP</name>
        <dbReference type="ChEBI" id="CHEBI:30616"/>
    </ligand>
</feature>
<feature type="binding site" evidence="1">
    <location>
        <position position="167"/>
    </location>
    <ligand>
        <name>ATP</name>
        <dbReference type="ChEBI" id="CHEBI:30616"/>
    </ligand>
</feature>
<feature type="binding site" evidence="2">
    <location>
        <begin position="169"/>
        <end position="170"/>
    </location>
    <ligand>
        <name>substrate</name>
    </ligand>
</feature>
<feature type="binding site" evidence="2">
    <location>
        <begin position="213"/>
        <end position="215"/>
    </location>
    <ligand>
        <name>ATP</name>
        <dbReference type="ChEBI" id="CHEBI:30616"/>
    </ligand>
</feature>
<organism>
    <name type="scientific">Eremothecium gossypii (strain ATCC 10895 / CBS 109.51 / FGSC 9923 / NRRL Y-1056)</name>
    <name type="common">Yeast</name>
    <name type="synonym">Ashbya gossypii</name>
    <dbReference type="NCBI Taxonomy" id="284811"/>
    <lineage>
        <taxon>Eukaryota</taxon>
        <taxon>Fungi</taxon>
        <taxon>Dikarya</taxon>
        <taxon>Ascomycota</taxon>
        <taxon>Saccharomycotina</taxon>
        <taxon>Saccharomycetes</taxon>
        <taxon>Saccharomycetales</taxon>
        <taxon>Saccharomycetaceae</taxon>
        <taxon>Eremothecium</taxon>
    </lineage>
</organism>
<comment type="function">
    <text evidence="1">Catalyzes the phosphorylation of nicotinamide riboside (NR) and nicotinic acid riboside (NaR) to form nicotinamide mononucleotide (NMN) and nicotinic acid mononucleotide (NaMN).</text>
</comment>
<comment type="catalytic activity">
    <reaction evidence="2">
        <text>beta-nicotinamide D-riboside + ATP = beta-nicotinamide D-ribonucleotide + ADP + H(+)</text>
        <dbReference type="Rhea" id="RHEA:14017"/>
        <dbReference type="ChEBI" id="CHEBI:14649"/>
        <dbReference type="ChEBI" id="CHEBI:15378"/>
        <dbReference type="ChEBI" id="CHEBI:15927"/>
        <dbReference type="ChEBI" id="CHEBI:30616"/>
        <dbReference type="ChEBI" id="CHEBI:456216"/>
        <dbReference type="EC" id="2.7.1.22"/>
    </reaction>
</comment>
<comment type="catalytic activity">
    <reaction evidence="2">
        <text>beta-D-ribosylnicotinate + ATP = nicotinate beta-D-ribonucleotide + ADP + H(+)</text>
        <dbReference type="Rhea" id="RHEA:25568"/>
        <dbReference type="ChEBI" id="CHEBI:15378"/>
        <dbReference type="ChEBI" id="CHEBI:30616"/>
        <dbReference type="ChEBI" id="CHEBI:57502"/>
        <dbReference type="ChEBI" id="CHEBI:58527"/>
        <dbReference type="ChEBI" id="CHEBI:456216"/>
        <dbReference type="EC" id="2.7.1.173"/>
    </reaction>
</comment>
<comment type="pathway">
    <text evidence="2">Cofactor biosynthesis; NAD(+) biosynthesis.</text>
</comment>
<comment type="similarity">
    <text evidence="3">Belongs to the uridine kinase family. NRK subfamily.</text>
</comment>
<proteinExistence type="inferred from homology"/>
<reference key="1">
    <citation type="journal article" date="2004" name="Science">
        <title>The Ashbya gossypii genome as a tool for mapping the ancient Saccharomyces cerevisiae genome.</title>
        <authorList>
            <person name="Dietrich F.S."/>
            <person name="Voegeli S."/>
            <person name="Brachat S."/>
            <person name="Lerch A."/>
            <person name="Gates K."/>
            <person name="Steiner S."/>
            <person name="Mohr C."/>
            <person name="Poehlmann R."/>
            <person name="Luedi P."/>
            <person name="Choi S."/>
            <person name="Wing R.A."/>
            <person name="Flavier A."/>
            <person name="Gaffney T.D."/>
            <person name="Philippsen P."/>
        </authorList>
    </citation>
    <scope>NUCLEOTIDE SEQUENCE [LARGE SCALE GENOMIC DNA]</scope>
    <source>
        <strain>ATCC 10895 / CBS 109.51 / FGSC 9923 / NRRL Y-1056</strain>
    </source>
</reference>
<reference key="2">
    <citation type="journal article" date="2013" name="G3 (Bethesda)">
        <title>Genomes of Ashbya fungi isolated from insects reveal four mating-type loci, numerous translocations, lack of transposons, and distinct gene duplications.</title>
        <authorList>
            <person name="Dietrich F.S."/>
            <person name="Voegeli S."/>
            <person name="Kuo S."/>
            <person name="Philippsen P."/>
        </authorList>
    </citation>
    <scope>GENOME REANNOTATION</scope>
    <source>
        <strain>ATCC 10895 / CBS 109.51 / FGSC 9923 / NRRL Y-1056</strain>
    </source>
</reference>
<sequence length="241" mass="27239">MTSQLAGFKGTRGTLLVGIGGCSSSGKSTIAKLAVQVLEDAVLVHQDDFYRHDDEVPFDEEYQIGNWDVPEALDMAQFERELDHIRATGRPAAKLVHNGNIDDVGKFGISEEYLEELRRRYRGRISQPVVLVDGFMLYHDDKVAARFDCRLLVRAPYATMKARRASRGGYKTLDSFWQDPPFYFDKFVYKSYAATHARLFRNCDVEDRLVAPDVQEIYNGDEAQITCVLEQVLDAIAAAQC</sequence>
<dbReference type="EC" id="2.7.1.22" evidence="2"/>
<dbReference type="EC" id="2.7.1.173" evidence="2"/>
<dbReference type="EMBL" id="AE016820">
    <property type="protein sequence ID" value="AAS54832.2"/>
    <property type="molecule type" value="Genomic_DNA"/>
</dbReference>
<dbReference type="RefSeq" id="NP_987008.2">
    <property type="nucleotide sequence ID" value="NM_212070.2"/>
</dbReference>
<dbReference type="SMR" id="P62511"/>
<dbReference type="FunCoup" id="P62511">
    <property type="interactions" value="47"/>
</dbReference>
<dbReference type="STRING" id="284811.P62511"/>
<dbReference type="EnsemblFungi" id="AAS54832">
    <property type="protein sequence ID" value="AAS54832"/>
    <property type="gene ID" value="AGOS_AGR342C"/>
</dbReference>
<dbReference type="GeneID" id="4623311"/>
<dbReference type="KEGG" id="ago:AGOS_AGR342C"/>
<dbReference type="eggNOG" id="KOG3308">
    <property type="taxonomic scope" value="Eukaryota"/>
</dbReference>
<dbReference type="HOGENOM" id="CLU_058668_1_0_1"/>
<dbReference type="InParanoid" id="P62511"/>
<dbReference type="OMA" id="MDMEAMT"/>
<dbReference type="OrthoDB" id="10041966at2759"/>
<dbReference type="UniPathway" id="UPA00253"/>
<dbReference type="Proteomes" id="UP000000591">
    <property type="component" value="Chromosome VII"/>
</dbReference>
<dbReference type="GO" id="GO:0005737">
    <property type="term" value="C:cytoplasm"/>
    <property type="evidence" value="ECO:0000318"/>
    <property type="project" value="GO_Central"/>
</dbReference>
<dbReference type="GO" id="GO:0005524">
    <property type="term" value="F:ATP binding"/>
    <property type="evidence" value="ECO:0007669"/>
    <property type="project" value="UniProtKB-KW"/>
</dbReference>
<dbReference type="GO" id="GO:0046872">
    <property type="term" value="F:metal ion binding"/>
    <property type="evidence" value="ECO:0007669"/>
    <property type="project" value="UniProtKB-KW"/>
</dbReference>
<dbReference type="GO" id="GO:0034317">
    <property type="term" value="F:nicotinate riboside kinase activity"/>
    <property type="evidence" value="ECO:0007669"/>
    <property type="project" value="UniProtKB-EC"/>
</dbReference>
<dbReference type="GO" id="GO:0050262">
    <property type="term" value="F:ribosylnicotinamide kinase activity"/>
    <property type="evidence" value="ECO:0000318"/>
    <property type="project" value="GO_Central"/>
</dbReference>
<dbReference type="GO" id="GO:0061769">
    <property type="term" value="F:ribosylnicotinate kinase activity"/>
    <property type="evidence" value="ECO:0000318"/>
    <property type="project" value="GO_Central"/>
</dbReference>
<dbReference type="GO" id="GO:0009435">
    <property type="term" value="P:NAD biosynthetic process"/>
    <property type="evidence" value="ECO:0007669"/>
    <property type="project" value="UniProtKB-UniPathway"/>
</dbReference>
<dbReference type="GO" id="GO:0046495">
    <property type="term" value="P:nicotinamide riboside metabolic process"/>
    <property type="evidence" value="ECO:0007669"/>
    <property type="project" value="EnsemblFungi"/>
</dbReference>
<dbReference type="CDD" id="cd02024">
    <property type="entry name" value="NRK1"/>
    <property type="match status" value="1"/>
</dbReference>
<dbReference type="Gene3D" id="3.40.50.300">
    <property type="entry name" value="P-loop containing nucleotide triphosphate hydrolases"/>
    <property type="match status" value="1"/>
</dbReference>
<dbReference type="InterPro" id="IPR027417">
    <property type="entry name" value="P-loop_NTPase"/>
</dbReference>
<dbReference type="PANTHER" id="PTHR10285">
    <property type="entry name" value="URIDINE KINASE"/>
    <property type="match status" value="1"/>
</dbReference>
<dbReference type="SUPFAM" id="SSF52540">
    <property type="entry name" value="P-loop containing nucleoside triphosphate hydrolases"/>
    <property type="match status" value="1"/>
</dbReference>